<organism>
    <name type="scientific">Oryza sativa subsp. japonica</name>
    <name type="common">Rice</name>
    <dbReference type="NCBI Taxonomy" id="39947"/>
    <lineage>
        <taxon>Eukaryota</taxon>
        <taxon>Viridiplantae</taxon>
        <taxon>Streptophyta</taxon>
        <taxon>Embryophyta</taxon>
        <taxon>Tracheophyta</taxon>
        <taxon>Spermatophyta</taxon>
        <taxon>Magnoliopsida</taxon>
        <taxon>Liliopsida</taxon>
        <taxon>Poales</taxon>
        <taxon>Poaceae</taxon>
        <taxon>BOP clade</taxon>
        <taxon>Oryzoideae</taxon>
        <taxon>Oryzeae</taxon>
        <taxon>Oryzinae</taxon>
        <taxon>Oryza</taxon>
        <taxon>Oryza sativa</taxon>
    </lineage>
</organism>
<comment type="function">
    <text evidence="3">Catalyzes the formation of phosphatidylethanolamine (PtdEtn) from phosphatidylserine (PtdSer). Plays a central role in phospholipid metabolism and in the interorganelle trafficking of phosphatidylserine.</text>
</comment>
<comment type="catalytic activity">
    <reaction evidence="3">
        <text>a 1,2-diacyl-sn-glycero-3-phospho-L-serine + H(+) = a 1,2-diacyl-sn-glycero-3-phosphoethanolamine + CO2</text>
        <dbReference type="Rhea" id="RHEA:20828"/>
        <dbReference type="ChEBI" id="CHEBI:15378"/>
        <dbReference type="ChEBI" id="CHEBI:16526"/>
        <dbReference type="ChEBI" id="CHEBI:57262"/>
        <dbReference type="ChEBI" id="CHEBI:64612"/>
        <dbReference type="EC" id="4.1.1.65"/>
    </reaction>
</comment>
<comment type="cofactor">
    <cofactor evidence="3">
        <name>pyruvate</name>
        <dbReference type="ChEBI" id="CHEBI:15361"/>
    </cofactor>
    <text evidence="3">Binds 1 pyruvoyl group covalently per subunit.</text>
</comment>
<comment type="pathway">
    <text evidence="3">Phospholipid metabolism; phosphatidylethanolamine biosynthesis; phosphatidylethanolamine from CDP-diacylglycerol: step 2/2.</text>
</comment>
<comment type="subunit">
    <text evidence="3">Heterodimer of a large membrane-associated beta subunit and a small pyruvoyl-containing alpha subunit.</text>
</comment>
<comment type="subcellular location">
    <subcellularLocation>
        <location evidence="2">Vacuole membrane</location>
        <topology evidence="2">Peripheral membrane protein</topology>
    </subcellularLocation>
    <subcellularLocation>
        <location evidence="1">Endoplasmic reticulum membrane</location>
        <topology evidence="1">Peripheral membrane protein</topology>
    </subcellularLocation>
</comment>
<comment type="PTM">
    <text evidence="3">Is synthesized initially as an inactive proenzyme. Formation of the active enzyme involves a self-maturation process in which the active site pyruvoyl group is generated from an internal serine residue via an autocatalytic post-translational modification. Two non-identical subunits are generated from the proenzyme in this reaction, and the pyruvate is formed at the N-terminus of the alpha chain, which is derived from the carboxyl end of the proenzyme. The autoendoproteolytic cleavage occurs by a canonical serine protease mechanism, in which the side chain hydroxyl group of the serine supplies its oxygen atom to form the C-terminus of the beta chain, while the remainder of the serine residue undergoes an oxidative deamination to produce ammonia and the pyruvoyl prosthetic group on the alpha chain. During this reaction, the Ser that is part of the protease active site of the proenzyme becomes the pyruvoyl prosthetic group, which constitutes an essential element of the active site of the mature decarboxylase.</text>
</comment>
<comment type="similarity">
    <text evidence="3">Belongs to the phosphatidylserine decarboxylase family. PSD-B subfamily. Eukaryotic type II sub-subfamily.</text>
</comment>
<comment type="sequence caution" evidence="6">
    <conflict type="erroneous gene model prediction">
        <sequence resource="EMBL-CDS" id="BAD87120"/>
    </conflict>
    <text>Was originally thought to correspond to two different genes.</text>
</comment>
<comment type="sequence caution" evidence="6">
    <conflict type="erroneous gene model prediction">
        <sequence resource="EMBL-CDS" id="BAD87121"/>
    </conflict>
    <text>Was originally thought to correspond to two different genes.</text>
</comment>
<comment type="sequence caution" evidence="6">
    <conflict type="erroneous gene model prediction">
        <sequence resource="EMBL-CDS" id="BAF07375"/>
    </conflict>
</comment>
<dbReference type="EC" id="4.1.1.65" evidence="3"/>
<dbReference type="EMBL" id="AP003238">
    <property type="protein sequence ID" value="BAD87120.1"/>
    <property type="status" value="ALT_SEQ"/>
    <property type="molecule type" value="Genomic_DNA"/>
</dbReference>
<dbReference type="EMBL" id="AP003238">
    <property type="protein sequence ID" value="BAD87121.1"/>
    <property type="status" value="ALT_SEQ"/>
    <property type="molecule type" value="Genomic_DNA"/>
</dbReference>
<dbReference type="EMBL" id="AP008207">
    <property type="protein sequence ID" value="BAF07375.2"/>
    <property type="status" value="ALT_SEQ"/>
    <property type="molecule type" value="Genomic_DNA"/>
</dbReference>
<dbReference type="EMBL" id="AP014957">
    <property type="status" value="NOT_ANNOTATED_CDS"/>
    <property type="molecule type" value="Genomic_DNA"/>
</dbReference>
<dbReference type="SMR" id="Q5JN42"/>
<dbReference type="FunCoup" id="Q5JN42">
    <property type="interactions" value="16"/>
</dbReference>
<dbReference type="STRING" id="39947.Q5JN42"/>
<dbReference type="PaxDb" id="39947-Q5JN42"/>
<dbReference type="KEGG" id="dosa:Os01g0959800"/>
<dbReference type="eggNOG" id="KOG2419">
    <property type="taxonomic scope" value="Eukaryota"/>
</dbReference>
<dbReference type="InParanoid" id="Q5JN42"/>
<dbReference type="PlantReactome" id="R-OSA-1119402">
    <property type="pathway name" value="Phospholipid biosynthesis I"/>
</dbReference>
<dbReference type="UniPathway" id="UPA00558">
    <property type="reaction ID" value="UER00616"/>
</dbReference>
<dbReference type="Proteomes" id="UP000000763">
    <property type="component" value="Chromosome 1"/>
</dbReference>
<dbReference type="Proteomes" id="UP000059680">
    <property type="component" value="Chromosome 1"/>
</dbReference>
<dbReference type="GO" id="GO:0005789">
    <property type="term" value="C:endoplasmic reticulum membrane"/>
    <property type="evidence" value="ECO:0007669"/>
    <property type="project" value="UniProtKB-SubCell"/>
</dbReference>
<dbReference type="GO" id="GO:0005774">
    <property type="term" value="C:vacuolar membrane"/>
    <property type="evidence" value="ECO:0007669"/>
    <property type="project" value="UniProtKB-SubCell"/>
</dbReference>
<dbReference type="GO" id="GO:0005509">
    <property type="term" value="F:calcium ion binding"/>
    <property type="evidence" value="ECO:0007669"/>
    <property type="project" value="InterPro"/>
</dbReference>
<dbReference type="GO" id="GO:0004609">
    <property type="term" value="F:phosphatidylserine decarboxylase activity"/>
    <property type="evidence" value="ECO:0007669"/>
    <property type="project" value="UniProtKB-UniRule"/>
</dbReference>
<dbReference type="GO" id="GO:0006646">
    <property type="term" value="P:phosphatidylethanolamine biosynthetic process"/>
    <property type="evidence" value="ECO:0007669"/>
    <property type="project" value="UniProtKB-UniRule"/>
</dbReference>
<dbReference type="GO" id="GO:0016540">
    <property type="term" value="P:protein autoprocessing"/>
    <property type="evidence" value="ECO:0007669"/>
    <property type="project" value="UniProtKB-UniRule"/>
</dbReference>
<dbReference type="CDD" id="cd00051">
    <property type="entry name" value="EFh"/>
    <property type="match status" value="1"/>
</dbReference>
<dbReference type="FunFam" id="1.10.238.10:FF:000200">
    <property type="entry name" value="Phosphatidylserine decarboxylase proenzyme 2"/>
    <property type="match status" value="1"/>
</dbReference>
<dbReference type="Gene3D" id="1.10.238.10">
    <property type="entry name" value="EF-hand"/>
    <property type="match status" value="1"/>
</dbReference>
<dbReference type="HAMAP" id="MF_00663">
    <property type="entry name" value="PS_decarb_PSD_B_type2"/>
    <property type="match status" value="1"/>
</dbReference>
<dbReference type="InterPro" id="IPR000008">
    <property type="entry name" value="C2_dom"/>
</dbReference>
<dbReference type="InterPro" id="IPR011992">
    <property type="entry name" value="EF-hand-dom_pair"/>
</dbReference>
<dbReference type="InterPro" id="IPR018247">
    <property type="entry name" value="EF_Hand_1_Ca_BS"/>
</dbReference>
<dbReference type="InterPro" id="IPR002048">
    <property type="entry name" value="EF_hand_dom"/>
</dbReference>
<dbReference type="InterPro" id="IPR003817">
    <property type="entry name" value="PS_Dcarbxylase"/>
</dbReference>
<dbReference type="InterPro" id="IPR033177">
    <property type="entry name" value="PSD-B"/>
</dbReference>
<dbReference type="InterPro" id="IPR033179">
    <property type="entry name" value="PSD_type2_pro"/>
</dbReference>
<dbReference type="NCBIfam" id="TIGR00163">
    <property type="entry name" value="PS_decarb"/>
    <property type="match status" value="1"/>
</dbReference>
<dbReference type="PANTHER" id="PTHR10067">
    <property type="entry name" value="PHOSPHATIDYLSERINE DECARBOXYLASE"/>
    <property type="match status" value="1"/>
</dbReference>
<dbReference type="PANTHER" id="PTHR10067:SF17">
    <property type="entry name" value="PHOSPHATIDYLSERINE DECARBOXYLASE PROENZYME 2"/>
    <property type="match status" value="1"/>
</dbReference>
<dbReference type="Pfam" id="PF13499">
    <property type="entry name" value="EF-hand_7"/>
    <property type="match status" value="1"/>
</dbReference>
<dbReference type="Pfam" id="PF02666">
    <property type="entry name" value="PS_Dcarbxylase"/>
    <property type="match status" value="1"/>
</dbReference>
<dbReference type="SMART" id="SM00054">
    <property type="entry name" value="EFh"/>
    <property type="match status" value="2"/>
</dbReference>
<dbReference type="SUPFAM" id="SSF47473">
    <property type="entry name" value="EF-hand"/>
    <property type="match status" value="1"/>
</dbReference>
<dbReference type="PROSITE" id="PS50004">
    <property type="entry name" value="C2"/>
    <property type="match status" value="1"/>
</dbReference>
<dbReference type="PROSITE" id="PS00018">
    <property type="entry name" value="EF_HAND_1"/>
    <property type="match status" value="2"/>
</dbReference>
<dbReference type="PROSITE" id="PS50222">
    <property type="entry name" value="EF_HAND_2"/>
    <property type="match status" value="2"/>
</dbReference>
<accession>Q5JN42</accession>
<accession>Q0JFV3</accession>
<accession>Q5JN41</accession>
<reference key="1">
    <citation type="journal article" date="2002" name="Nature">
        <title>The genome sequence and structure of rice chromosome 1.</title>
        <authorList>
            <person name="Sasaki T."/>
            <person name="Matsumoto T."/>
            <person name="Yamamoto K."/>
            <person name="Sakata K."/>
            <person name="Baba T."/>
            <person name="Katayose Y."/>
            <person name="Wu J."/>
            <person name="Niimura Y."/>
            <person name="Cheng Z."/>
            <person name="Nagamura Y."/>
            <person name="Antonio B.A."/>
            <person name="Kanamori H."/>
            <person name="Hosokawa S."/>
            <person name="Masukawa M."/>
            <person name="Arikawa K."/>
            <person name="Chiden Y."/>
            <person name="Hayashi M."/>
            <person name="Okamoto M."/>
            <person name="Ando T."/>
            <person name="Aoki H."/>
            <person name="Arita K."/>
            <person name="Hamada M."/>
            <person name="Harada C."/>
            <person name="Hijishita S."/>
            <person name="Honda M."/>
            <person name="Ichikawa Y."/>
            <person name="Idonuma A."/>
            <person name="Iijima M."/>
            <person name="Ikeda M."/>
            <person name="Ikeno M."/>
            <person name="Ito S."/>
            <person name="Ito T."/>
            <person name="Ito Y."/>
            <person name="Ito Y."/>
            <person name="Iwabuchi A."/>
            <person name="Kamiya K."/>
            <person name="Karasawa W."/>
            <person name="Katagiri S."/>
            <person name="Kikuta A."/>
            <person name="Kobayashi N."/>
            <person name="Kono I."/>
            <person name="Machita K."/>
            <person name="Maehara T."/>
            <person name="Mizuno H."/>
            <person name="Mizubayashi T."/>
            <person name="Mukai Y."/>
            <person name="Nagasaki H."/>
            <person name="Nakashima M."/>
            <person name="Nakama Y."/>
            <person name="Nakamichi Y."/>
            <person name="Nakamura M."/>
            <person name="Namiki N."/>
            <person name="Negishi M."/>
            <person name="Ohta I."/>
            <person name="Ono N."/>
            <person name="Saji S."/>
            <person name="Sakai K."/>
            <person name="Shibata M."/>
            <person name="Shimokawa T."/>
            <person name="Shomura A."/>
            <person name="Song J."/>
            <person name="Takazaki Y."/>
            <person name="Terasawa K."/>
            <person name="Tsuji K."/>
            <person name="Waki K."/>
            <person name="Yamagata H."/>
            <person name="Yamane H."/>
            <person name="Yoshiki S."/>
            <person name="Yoshihara R."/>
            <person name="Yukawa K."/>
            <person name="Zhong H."/>
            <person name="Iwama H."/>
            <person name="Endo T."/>
            <person name="Ito H."/>
            <person name="Hahn J.H."/>
            <person name="Kim H.-I."/>
            <person name="Eun M.-Y."/>
            <person name="Yano M."/>
            <person name="Jiang J."/>
            <person name="Gojobori T."/>
        </authorList>
    </citation>
    <scope>NUCLEOTIDE SEQUENCE [LARGE SCALE GENOMIC DNA]</scope>
    <source>
        <strain>cv. Nipponbare</strain>
    </source>
</reference>
<reference key="2">
    <citation type="journal article" date="2005" name="Nature">
        <title>The map-based sequence of the rice genome.</title>
        <authorList>
            <consortium name="International rice genome sequencing project (IRGSP)"/>
        </authorList>
    </citation>
    <scope>NUCLEOTIDE SEQUENCE [LARGE SCALE GENOMIC DNA]</scope>
    <source>
        <strain>cv. Nipponbare</strain>
    </source>
</reference>
<reference key="3">
    <citation type="journal article" date="2008" name="Nucleic Acids Res.">
        <title>The rice annotation project database (RAP-DB): 2008 update.</title>
        <authorList>
            <consortium name="The rice annotation project (RAP)"/>
        </authorList>
    </citation>
    <scope>GENOME REANNOTATION</scope>
    <source>
        <strain>cv. Nipponbare</strain>
    </source>
</reference>
<reference key="4">
    <citation type="journal article" date="2013" name="Rice">
        <title>Improvement of the Oryza sativa Nipponbare reference genome using next generation sequence and optical map data.</title>
        <authorList>
            <person name="Kawahara Y."/>
            <person name="de la Bastide M."/>
            <person name="Hamilton J.P."/>
            <person name="Kanamori H."/>
            <person name="McCombie W.R."/>
            <person name="Ouyang S."/>
            <person name="Schwartz D.C."/>
            <person name="Tanaka T."/>
            <person name="Wu J."/>
            <person name="Zhou S."/>
            <person name="Childs K.L."/>
            <person name="Davidson R.M."/>
            <person name="Lin H."/>
            <person name="Quesada-Ocampo L."/>
            <person name="Vaillancourt B."/>
            <person name="Sakai H."/>
            <person name="Lee S.S."/>
            <person name="Kim J."/>
            <person name="Numa H."/>
            <person name="Itoh T."/>
            <person name="Buell C.R."/>
            <person name="Matsumoto T."/>
        </authorList>
    </citation>
    <scope>GENOME REANNOTATION</scope>
    <source>
        <strain>cv. Nipponbare</strain>
    </source>
</reference>
<keyword id="KW-0106">Calcium</keyword>
<keyword id="KW-0210">Decarboxylase</keyword>
<keyword id="KW-0256">Endoplasmic reticulum</keyword>
<keyword id="KW-0444">Lipid biosynthesis</keyword>
<keyword id="KW-0443">Lipid metabolism</keyword>
<keyword id="KW-0456">Lyase</keyword>
<keyword id="KW-0472">Membrane</keyword>
<keyword id="KW-0479">Metal-binding</keyword>
<keyword id="KW-0594">Phospholipid biosynthesis</keyword>
<keyword id="KW-1208">Phospholipid metabolism</keyword>
<keyword id="KW-0670">Pyruvate</keyword>
<keyword id="KW-1185">Reference proteome</keyword>
<keyword id="KW-0677">Repeat</keyword>
<keyword id="KW-0926">Vacuole</keyword>
<keyword id="KW-0865">Zymogen</keyword>
<evidence type="ECO:0000250" key="1">
    <source>
        <dbReference type="UniProtKB" id="A4GNA8"/>
    </source>
</evidence>
<evidence type="ECO:0000250" key="2">
    <source>
        <dbReference type="UniProtKB" id="F4KAK5"/>
    </source>
</evidence>
<evidence type="ECO:0000255" key="3">
    <source>
        <dbReference type="HAMAP-Rule" id="MF_03209"/>
    </source>
</evidence>
<evidence type="ECO:0000255" key="4">
    <source>
        <dbReference type="PROSITE-ProRule" id="PRU00041"/>
    </source>
</evidence>
<evidence type="ECO:0000256" key="5">
    <source>
        <dbReference type="SAM" id="MobiDB-lite"/>
    </source>
</evidence>
<evidence type="ECO:0000305" key="6"/>
<sequence>MGHSPSRHNACGGGGGDGESPPSPLPSRFERFRRRLRLRHRDRAGRPGGDAHASESGTGRAIAVDEFAGIARIRIVKEKKVVVETNGPHIARISVFETNRFSKNTLVGYCEVDLFELLTKDLDEHSEVLSLLDPSSSATIVGSISISCYIEDPVETEQSFARRVLAIVDYNEDGELSLSEFSDLMKAFGNKLAVAKIEELFRQADKNGDGIVDMDELAALLANQQEKEPLISNCPVCGEILGKHDKINDMIHMTLCFDEGTGNQIMTGGFLTDKQASYGWMFKLSEWAHFSSYDVGLHSGSTASHILVFDRRTKRLVEEVIDGKIVLSMRALYQSKVGLTLIDTGVKDLLKNLSEKQGKKMSSPESAKDIPKFLELFKDQINLDEVKDPLESFKTFNEFFVRQLKPGARPIACYEQDTIATCAADSRLMTFSSVDESTRLWIKGRKFSIEGLLGKDVHSDALCNGSLVIFRLAPQDYHRFHVPVSGTLEKFVEIPGCLYTVNPIAVNSKYCNVFTENKRVVSIISTSEFGKVAFVAIGATMVGSIEFLKEEGDYVHKGDEFGYFAFGGSTVICVFEKDAIEFDADLLANSARSLETLVSVGMRLGVSTRNRDLQPQELEKCSLE</sequence>
<gene>
    <name evidence="3" type="primary">PSD2</name>
    <name type="ordered locus">Os01g0959800</name>
    <name type="ordered locus">LOC_Os01g72940</name>
    <name type="ORF">P0401G10.19</name>
</gene>
<name>PSD2_ORYSJ</name>
<proteinExistence type="inferred from homology"/>
<protein>
    <recommendedName>
        <fullName evidence="3">Phosphatidylserine decarboxylase proenzyme 2</fullName>
        <ecNumber evidence="3">4.1.1.65</ecNumber>
    </recommendedName>
    <component>
        <recommendedName>
            <fullName evidence="3">Phosphatidylserine decarboxylase 2 beta chain</fullName>
        </recommendedName>
    </component>
    <component>
        <recommendedName>
            <fullName evidence="3">Phosphatidylserine decarboxylase 2 alpha chain</fullName>
        </recommendedName>
    </component>
</protein>
<feature type="initiator methionine" description="Removed" evidence="1">
    <location>
        <position position="1"/>
    </location>
</feature>
<feature type="chain" id="PRO_0000429523" description="Phosphatidylserine decarboxylase proenzyme 2">
    <location>
        <begin position="2"/>
        <end position="624"/>
    </location>
</feature>
<feature type="chain" id="PRO_0000429524" description="Phosphatidylserine decarboxylase 2 beta chain" evidence="3">
    <location>
        <begin position="2"/>
        <end position="568"/>
    </location>
</feature>
<feature type="chain" id="PRO_0000429525" description="Phosphatidylserine decarboxylase 2 alpha chain" evidence="3">
    <location>
        <begin position="569"/>
        <end position="624"/>
    </location>
</feature>
<feature type="domain" description="C2" evidence="4">
    <location>
        <begin position="16"/>
        <end position="129"/>
    </location>
</feature>
<feature type="domain" description="EF-hand 1" evidence="3">
    <location>
        <begin position="156"/>
        <end position="191"/>
    </location>
</feature>
<feature type="domain" description="EF-hand 2" evidence="3">
    <location>
        <begin position="192"/>
        <end position="227"/>
    </location>
</feature>
<feature type="region of interest" description="Disordered" evidence="5">
    <location>
        <begin position="1"/>
        <end position="30"/>
    </location>
</feature>
<feature type="active site" description="Charge relay system; for autoendoproteolytic cleavage activity" evidence="3">
    <location>
        <position position="425"/>
    </location>
</feature>
<feature type="active site" description="Charge relay system; for autoendoproteolytic cleavage activity" evidence="3">
    <location>
        <position position="481"/>
    </location>
</feature>
<feature type="active site" description="Charge relay system; for autoendoproteolytic cleavage activity" evidence="3">
    <location>
        <position position="569"/>
    </location>
</feature>
<feature type="active site" description="Schiff-base intermediate with substrate; via pyruvic acid; for decarboxylase activity" evidence="3">
    <location>
        <position position="569"/>
    </location>
</feature>
<feature type="binding site" evidence="3">
    <location>
        <position position="169"/>
    </location>
    <ligand>
        <name>Ca(2+)</name>
        <dbReference type="ChEBI" id="CHEBI:29108"/>
        <label>1</label>
    </ligand>
</feature>
<feature type="binding site" evidence="3">
    <location>
        <position position="171"/>
    </location>
    <ligand>
        <name>Ca(2+)</name>
        <dbReference type="ChEBI" id="CHEBI:29108"/>
        <label>1</label>
    </ligand>
</feature>
<feature type="binding site" evidence="3">
    <location>
        <position position="173"/>
    </location>
    <ligand>
        <name>Ca(2+)</name>
        <dbReference type="ChEBI" id="CHEBI:29108"/>
        <label>1</label>
    </ligand>
</feature>
<feature type="binding site" evidence="3">
    <location>
        <position position="175"/>
    </location>
    <ligand>
        <name>Ca(2+)</name>
        <dbReference type="ChEBI" id="CHEBI:29108"/>
        <label>1</label>
    </ligand>
</feature>
<feature type="binding site" evidence="3">
    <location>
        <position position="180"/>
    </location>
    <ligand>
        <name>Ca(2+)</name>
        <dbReference type="ChEBI" id="CHEBI:29108"/>
        <label>1</label>
    </ligand>
</feature>
<feature type="binding site" evidence="3">
    <location>
        <position position="205"/>
    </location>
    <ligand>
        <name>Ca(2+)</name>
        <dbReference type="ChEBI" id="CHEBI:29108"/>
        <label>2</label>
    </ligand>
</feature>
<feature type="binding site" evidence="3">
    <location>
        <position position="207"/>
    </location>
    <ligand>
        <name>Ca(2+)</name>
        <dbReference type="ChEBI" id="CHEBI:29108"/>
        <label>2</label>
    </ligand>
</feature>
<feature type="binding site" evidence="3">
    <location>
        <position position="209"/>
    </location>
    <ligand>
        <name>Ca(2+)</name>
        <dbReference type="ChEBI" id="CHEBI:29108"/>
        <label>2</label>
    </ligand>
</feature>
<feature type="binding site" evidence="3">
    <location>
        <position position="216"/>
    </location>
    <ligand>
        <name>Ca(2+)</name>
        <dbReference type="ChEBI" id="CHEBI:29108"/>
        <label>2</label>
    </ligand>
</feature>
<feature type="site" description="Cleavage (non-hydrolytic); by autocatalysis" evidence="3">
    <location>
        <begin position="568"/>
        <end position="569"/>
    </location>
</feature>
<feature type="modified residue" description="Pyruvic acid (Ser); by autocatalysis" evidence="3">
    <location>
        <position position="569"/>
    </location>
</feature>